<dbReference type="EMBL" id="AJ298098">
    <property type="protein sequence ID" value="CAC36322.1"/>
    <property type="molecule type" value="mRNA"/>
</dbReference>
<dbReference type="EMBL" id="AB018112">
    <property type="protein sequence ID" value="BAA96892.1"/>
    <property type="molecule type" value="Genomic_DNA"/>
</dbReference>
<dbReference type="EMBL" id="CP002688">
    <property type="protein sequence ID" value="AED94051.1"/>
    <property type="molecule type" value="Genomic_DNA"/>
</dbReference>
<dbReference type="EMBL" id="CP002688">
    <property type="protein sequence ID" value="AED94053.1"/>
    <property type="molecule type" value="Genomic_DNA"/>
</dbReference>
<dbReference type="EMBL" id="AY056234">
    <property type="protein sequence ID" value="AAL07083.1"/>
    <property type="molecule type" value="mRNA"/>
</dbReference>
<dbReference type="EMBL" id="AY117253">
    <property type="protein sequence ID" value="AAM51328.1"/>
    <property type="molecule type" value="mRNA"/>
</dbReference>
<dbReference type="EMBL" id="AY084711">
    <property type="protein sequence ID" value="AAM61285.1"/>
    <property type="molecule type" value="mRNA"/>
</dbReference>
<dbReference type="RefSeq" id="NP_851096.1">
    <molecule id="Q9LVY0-1"/>
    <property type="nucleotide sequence ID" value="NM_180765.2"/>
</dbReference>
<dbReference type="RefSeq" id="NP_851097.1">
    <molecule id="Q9LVY0-2"/>
    <property type="nucleotide sequence ID" value="NM_180766.1"/>
</dbReference>
<dbReference type="SMR" id="Q9LVY0"/>
<dbReference type="FunCoup" id="Q9LVY0">
    <property type="interactions" value="929"/>
</dbReference>
<dbReference type="STRING" id="3702.Q9LVY0"/>
<dbReference type="GlyGen" id="Q9LVY0">
    <property type="glycosylation" value="1 site"/>
</dbReference>
<dbReference type="PaxDb" id="3702-AT5G36170.1"/>
<dbReference type="ProteomicsDB" id="234871">
    <molecule id="Q9LVY0-1"/>
</dbReference>
<dbReference type="EnsemblPlants" id="AT5G36170.1">
    <molecule id="Q9LVY0-1"/>
    <property type="protein sequence ID" value="AT5G36170.1"/>
    <property type="gene ID" value="AT5G36170"/>
</dbReference>
<dbReference type="EnsemblPlants" id="AT5G36170.2">
    <molecule id="Q9LVY0-2"/>
    <property type="protein sequence ID" value="AT5G36170.2"/>
    <property type="gene ID" value="AT5G36170"/>
</dbReference>
<dbReference type="GeneID" id="833614"/>
<dbReference type="Gramene" id="AT5G36170.1">
    <molecule id="Q9LVY0-1"/>
    <property type="protein sequence ID" value="AT5G36170.1"/>
    <property type="gene ID" value="AT5G36170"/>
</dbReference>
<dbReference type="Gramene" id="AT5G36170.2">
    <molecule id="Q9LVY0-2"/>
    <property type="protein sequence ID" value="AT5G36170.2"/>
    <property type="gene ID" value="AT5G36170"/>
</dbReference>
<dbReference type="KEGG" id="ath:AT5G36170"/>
<dbReference type="Araport" id="AT5G36170"/>
<dbReference type="TAIR" id="AT5G36170">
    <property type="gene designation" value="HCF109"/>
</dbReference>
<dbReference type="eggNOG" id="KOG2726">
    <property type="taxonomic scope" value="Eukaryota"/>
</dbReference>
<dbReference type="InParanoid" id="Q9LVY0"/>
<dbReference type="OMA" id="YVFHPYQ"/>
<dbReference type="PhylomeDB" id="Q9LVY0"/>
<dbReference type="PRO" id="PR:Q9LVY0"/>
<dbReference type="Proteomes" id="UP000006548">
    <property type="component" value="Chromosome 5"/>
</dbReference>
<dbReference type="ExpressionAtlas" id="Q9LVY0">
    <property type="expression patterns" value="baseline and differential"/>
</dbReference>
<dbReference type="GO" id="GO:0009507">
    <property type="term" value="C:chloroplast"/>
    <property type="evidence" value="ECO:0000314"/>
    <property type="project" value="TAIR"/>
</dbReference>
<dbReference type="GO" id="GO:0009570">
    <property type="term" value="C:chloroplast stroma"/>
    <property type="evidence" value="ECO:0007005"/>
    <property type="project" value="TAIR"/>
</dbReference>
<dbReference type="GO" id="GO:0016149">
    <property type="term" value="F:translation release factor activity, codon specific"/>
    <property type="evidence" value="ECO:0007669"/>
    <property type="project" value="InterPro"/>
</dbReference>
<dbReference type="GO" id="GO:0009657">
    <property type="term" value="P:plastid organization"/>
    <property type="evidence" value="ECO:0000315"/>
    <property type="project" value="TAIR"/>
</dbReference>
<dbReference type="GO" id="GO:0006396">
    <property type="term" value="P:RNA processing"/>
    <property type="evidence" value="ECO:0000315"/>
    <property type="project" value="TAIR"/>
</dbReference>
<dbReference type="GO" id="GO:0006415">
    <property type="term" value="P:translational termination"/>
    <property type="evidence" value="ECO:0000315"/>
    <property type="project" value="TAIR"/>
</dbReference>
<dbReference type="FunFam" id="1.20.58.410:FF:000003">
    <property type="entry name" value="High chlorophyll fluorescent 109"/>
    <property type="match status" value="1"/>
</dbReference>
<dbReference type="FunFam" id="3.30.160.20:FF:000010">
    <property type="entry name" value="Peptide chain release factor 2"/>
    <property type="match status" value="1"/>
</dbReference>
<dbReference type="Gene3D" id="3.30.160.20">
    <property type="match status" value="1"/>
</dbReference>
<dbReference type="Gene3D" id="3.30.70.1660">
    <property type="match status" value="1"/>
</dbReference>
<dbReference type="Gene3D" id="1.20.58.410">
    <property type="entry name" value="Release factor"/>
    <property type="match status" value="1"/>
</dbReference>
<dbReference type="HAMAP" id="MF_00094">
    <property type="entry name" value="Rel_fac_2"/>
    <property type="match status" value="1"/>
</dbReference>
<dbReference type="InterPro" id="IPR005139">
    <property type="entry name" value="PCRF"/>
</dbReference>
<dbReference type="InterPro" id="IPR000352">
    <property type="entry name" value="Pep_chain_release_fac_I"/>
</dbReference>
<dbReference type="InterPro" id="IPR045853">
    <property type="entry name" value="Pep_chain_release_fac_I_sf"/>
</dbReference>
<dbReference type="InterPro" id="IPR004374">
    <property type="entry name" value="PrfB"/>
</dbReference>
<dbReference type="NCBIfam" id="TIGR00020">
    <property type="entry name" value="prfB"/>
    <property type="match status" value="1"/>
</dbReference>
<dbReference type="PANTHER" id="PTHR43116:SF3">
    <property type="entry name" value="CLASS I PEPTIDE CHAIN RELEASE FACTOR"/>
    <property type="match status" value="1"/>
</dbReference>
<dbReference type="PANTHER" id="PTHR43116">
    <property type="entry name" value="PEPTIDE CHAIN RELEASE FACTOR 2"/>
    <property type="match status" value="1"/>
</dbReference>
<dbReference type="Pfam" id="PF03462">
    <property type="entry name" value="PCRF"/>
    <property type="match status" value="1"/>
</dbReference>
<dbReference type="Pfam" id="PF00472">
    <property type="entry name" value="RF-1"/>
    <property type="match status" value="1"/>
</dbReference>
<dbReference type="SMART" id="SM00937">
    <property type="entry name" value="PCRF"/>
    <property type="match status" value="1"/>
</dbReference>
<dbReference type="SUPFAM" id="SSF75620">
    <property type="entry name" value="Release factor"/>
    <property type="match status" value="1"/>
</dbReference>
<dbReference type="PROSITE" id="PS00745">
    <property type="entry name" value="RF_PROK_I"/>
    <property type="match status" value="1"/>
</dbReference>
<reference key="1">
    <citation type="journal article" date="2002" name="Plant Cell">
        <title>A peptide chain release factor 2 affects the stability of UGA-containing transcripts in Arabidopsis chloroplasts.</title>
        <authorList>
            <person name="Meurer J."/>
            <person name="Lezhneva L."/>
            <person name="Amann K."/>
            <person name="Godel M."/>
            <person name="Bezhani S."/>
            <person name="Sherameti I."/>
            <person name="Oelmuller R."/>
        </authorList>
    </citation>
    <scope>NUCLEOTIDE SEQUENCE [MRNA] (ISOFORM 2)</scope>
    <scope>FUNCTION</scope>
    <scope>SUBCELLULAR LOCATION</scope>
    <scope>TISSUE SPECIFICITY</scope>
    <scope>INDUCTION BY LIGHT</scope>
    <scope>DISRUPTION PHENOTYPE</scope>
    <source>
        <strain>cv. Columbia</strain>
    </source>
</reference>
<reference key="2">
    <citation type="journal article" date="2000" name="DNA Res.">
        <title>Structural analysis of Arabidopsis thaliana chromosome 5. X. Sequence features of the regions of 3,076,755 bp covered by sixty P1 and TAC clones.</title>
        <authorList>
            <person name="Sato S."/>
            <person name="Nakamura Y."/>
            <person name="Kaneko T."/>
            <person name="Katoh T."/>
            <person name="Asamizu E."/>
            <person name="Kotani H."/>
            <person name="Tabata S."/>
        </authorList>
    </citation>
    <scope>NUCLEOTIDE SEQUENCE [LARGE SCALE GENOMIC DNA]</scope>
    <source>
        <strain>cv. Columbia</strain>
    </source>
</reference>
<reference key="3">
    <citation type="journal article" date="2017" name="Plant J.">
        <title>Araport11: a complete reannotation of the Arabidopsis thaliana reference genome.</title>
        <authorList>
            <person name="Cheng C.Y."/>
            <person name="Krishnakumar V."/>
            <person name="Chan A.P."/>
            <person name="Thibaud-Nissen F."/>
            <person name="Schobel S."/>
            <person name="Town C.D."/>
        </authorList>
    </citation>
    <scope>GENOME REANNOTATION</scope>
    <source>
        <strain>cv. Columbia</strain>
    </source>
</reference>
<reference key="4">
    <citation type="journal article" date="2003" name="Science">
        <title>Empirical analysis of transcriptional activity in the Arabidopsis genome.</title>
        <authorList>
            <person name="Yamada K."/>
            <person name="Lim J."/>
            <person name="Dale J.M."/>
            <person name="Chen H."/>
            <person name="Shinn P."/>
            <person name="Palm C.J."/>
            <person name="Southwick A.M."/>
            <person name="Wu H.C."/>
            <person name="Kim C.J."/>
            <person name="Nguyen M."/>
            <person name="Pham P.K."/>
            <person name="Cheuk R.F."/>
            <person name="Karlin-Newmann G."/>
            <person name="Liu S.X."/>
            <person name="Lam B."/>
            <person name="Sakano H."/>
            <person name="Wu T."/>
            <person name="Yu G."/>
            <person name="Miranda M."/>
            <person name="Quach H.L."/>
            <person name="Tripp M."/>
            <person name="Chang C.H."/>
            <person name="Lee J.M."/>
            <person name="Toriumi M.J."/>
            <person name="Chan M.M."/>
            <person name="Tang C.C."/>
            <person name="Onodera C.S."/>
            <person name="Deng J.M."/>
            <person name="Akiyama K."/>
            <person name="Ansari Y."/>
            <person name="Arakawa T."/>
            <person name="Banh J."/>
            <person name="Banno F."/>
            <person name="Bowser L."/>
            <person name="Brooks S.Y."/>
            <person name="Carninci P."/>
            <person name="Chao Q."/>
            <person name="Choy N."/>
            <person name="Enju A."/>
            <person name="Goldsmith A.D."/>
            <person name="Gurjal M."/>
            <person name="Hansen N.F."/>
            <person name="Hayashizaki Y."/>
            <person name="Johnson-Hopson C."/>
            <person name="Hsuan V.W."/>
            <person name="Iida K."/>
            <person name="Karnes M."/>
            <person name="Khan S."/>
            <person name="Koesema E."/>
            <person name="Ishida J."/>
            <person name="Jiang P.X."/>
            <person name="Jones T."/>
            <person name="Kawai J."/>
            <person name="Kamiya A."/>
            <person name="Meyers C."/>
            <person name="Nakajima M."/>
            <person name="Narusaka M."/>
            <person name="Seki M."/>
            <person name="Sakurai T."/>
            <person name="Satou M."/>
            <person name="Tamse R."/>
            <person name="Vaysberg M."/>
            <person name="Wallender E.K."/>
            <person name="Wong C."/>
            <person name="Yamamura Y."/>
            <person name="Yuan S."/>
            <person name="Shinozaki K."/>
            <person name="Davis R.W."/>
            <person name="Theologis A."/>
            <person name="Ecker J.R."/>
        </authorList>
    </citation>
    <scope>NUCLEOTIDE SEQUENCE [LARGE SCALE MRNA] (ISOFORM 1)</scope>
    <source>
        <strain>cv. Columbia</strain>
    </source>
</reference>
<reference key="5">
    <citation type="submission" date="2002-03" db="EMBL/GenBank/DDBJ databases">
        <title>Full-length cDNA from Arabidopsis thaliana.</title>
        <authorList>
            <person name="Brover V.V."/>
            <person name="Troukhan M.E."/>
            <person name="Alexandrov N.A."/>
            <person name="Lu Y.-P."/>
            <person name="Flavell R.B."/>
            <person name="Feldmann K.A."/>
        </authorList>
    </citation>
    <scope>NUCLEOTIDE SEQUENCE [LARGE SCALE MRNA] (ISOFORM 1)</scope>
</reference>
<reference key="6">
    <citation type="journal article" date="2011" name="Plant Cell">
        <title>Recruitment of a ribosomal release factor for light- and stress-dependent regulation of petB transcript stability in Arabidopsis chloroplasts.</title>
        <authorList>
            <person name="Stoppel R."/>
            <person name="Lezhneva L."/>
            <person name="Schwenkert S."/>
            <person name="Torabi S."/>
            <person name="Felder S."/>
            <person name="Meierhoff K."/>
            <person name="Westhoff P."/>
            <person name="Meurer J."/>
        </authorList>
    </citation>
    <scope>FUNCTION</scope>
</reference>
<protein>
    <recommendedName>
        <fullName evidence="5">Peptide chain release factor PrfB1, chloroplastic</fullName>
        <shortName evidence="5">AtPrfB1</shortName>
    </recommendedName>
    <alternativeName>
        <fullName evidence="4">AtPrfB</fullName>
    </alternativeName>
    <alternativeName>
        <fullName evidence="4">Protein HIGH CHLOROPHYLL FLUORESCENCE 109</fullName>
    </alternativeName>
</protein>
<name>PRFB1_ARATH</name>
<sequence length="456" mass="50977">MSMELTVLGPLAGRSFAIAGKPKLLLLRPTNLPLLRLSLPLSLPNFSSSSRFNSPIVFAAQESNLSVSNENETSEWLMQDFYTLRKDVEIASARVEEIRASANLQQLEQEITNLESKATDTSFWDDRTKAQETLSSLNDLKDRMRLLSEFKTMVEDAETIVKLTEEMDSTDVSLLEEAMGIIKELNKSLDKFELTQLLSGPYDKEGAVVYITAGAGGTDAQDWADMLLRMYMRWGEKQRYKTKVVEMSNGEEAGIKSATLEIEGRYAYGYISGEKGTHRIVRQSPFNSKGLRQTSFSGVEVMPLLPEEAVGIEIPEEDLDISFTRAGGKGGQNVNKVETAVRITHIPTGVAVRCTEERSQLANKTRALIRLKAKLMVIAEEQRATEIKEIRGDAVKAEWGQQIRNYVFHPYKLVKDVRTGHETSDITSVMDGDLDPFIKAYLKHKYTLAMASAVTN</sequence>
<gene>
    <name evidence="5" type="primary">PRFB1</name>
    <name evidence="4" type="synonym">HCF109</name>
    <name evidence="4" type="synonym">RF2</name>
    <name evidence="7" type="ordered locus">At5g36170</name>
    <name evidence="8" type="ORF">MAB16.12</name>
</gene>
<accession>Q9LVY0</accession>
<accession>Q9C5B2</accession>
<proteinExistence type="evidence at transcript level"/>
<feature type="transit peptide" description="Chloroplast" evidence="1">
    <location>
        <begin position="1"/>
        <end position="58"/>
    </location>
</feature>
<feature type="chain" id="PRO_0000430964" description="Peptide chain release factor PrfB1, chloroplastic" evidence="1">
    <location>
        <begin position="59"/>
        <end position="456"/>
    </location>
</feature>
<feature type="splice variant" id="VSP_057112" description="In isoform 2.">
    <location>
        <position position="57"/>
    </location>
</feature>
<comment type="function">
    <text evidence="2">Directs the termination of translation in response to the peptide chain termination codon UGA. Required for the proper translation, stability and normal processing of UGA-containing polycistronic transcripts in chloroplasts.</text>
</comment>
<comment type="subcellular location">
    <subcellularLocation>
        <location evidence="2 3">Plastid</location>
        <location evidence="2 3">Chloroplast stroma</location>
    </subcellularLocation>
</comment>
<comment type="alternative products">
    <event type="alternative splicing"/>
    <isoform>
        <id>Q9LVY0-1</id>
        <name>1</name>
        <sequence type="displayed"/>
    </isoform>
    <isoform>
        <id>Q9LVY0-2</id>
        <name>2</name>
        <sequence type="described" ref="VSP_057112"/>
    </isoform>
</comment>
<comment type="tissue specificity">
    <text evidence="2">Expressed in leaves, stems and flowers.</text>
</comment>
<comment type="induction">
    <text evidence="2">By light.</text>
</comment>
<comment type="disruption phenotype">
    <text evidence="2">High chlorophyll fluorescence phenotype (hcf) and severe lesions in thylakoid membrane complexes, predominantly in photosystem II.</text>
</comment>
<comment type="miscellaneous">
    <molecule>Isoform 2</molecule>
    <text evidence="6">May be due to a competing acceptor splice site.</text>
</comment>
<comment type="similarity">
    <text evidence="6">Belongs to the prokaryotic/mitochondrial release factor family.</text>
</comment>
<organism>
    <name type="scientific">Arabidopsis thaliana</name>
    <name type="common">Mouse-ear cress</name>
    <dbReference type="NCBI Taxonomy" id="3702"/>
    <lineage>
        <taxon>Eukaryota</taxon>
        <taxon>Viridiplantae</taxon>
        <taxon>Streptophyta</taxon>
        <taxon>Embryophyta</taxon>
        <taxon>Tracheophyta</taxon>
        <taxon>Spermatophyta</taxon>
        <taxon>Magnoliopsida</taxon>
        <taxon>eudicotyledons</taxon>
        <taxon>Gunneridae</taxon>
        <taxon>Pentapetalae</taxon>
        <taxon>rosids</taxon>
        <taxon>malvids</taxon>
        <taxon>Brassicales</taxon>
        <taxon>Brassicaceae</taxon>
        <taxon>Camelineae</taxon>
        <taxon>Arabidopsis</taxon>
    </lineage>
</organism>
<keyword id="KW-0025">Alternative splicing</keyword>
<keyword id="KW-0150">Chloroplast</keyword>
<keyword id="KW-0934">Plastid</keyword>
<keyword id="KW-0648">Protein biosynthesis</keyword>
<keyword id="KW-1185">Reference proteome</keyword>
<keyword id="KW-0809">Transit peptide</keyword>
<evidence type="ECO:0000255" key="1"/>
<evidence type="ECO:0000269" key="2">
    <source>
    </source>
</evidence>
<evidence type="ECO:0000269" key="3">
    <source>
    </source>
</evidence>
<evidence type="ECO:0000303" key="4">
    <source>
    </source>
</evidence>
<evidence type="ECO:0000303" key="5">
    <source>
    </source>
</evidence>
<evidence type="ECO:0000305" key="6"/>
<evidence type="ECO:0000312" key="7">
    <source>
        <dbReference type="Araport" id="AT5G36170"/>
    </source>
</evidence>
<evidence type="ECO:0000312" key="8">
    <source>
        <dbReference type="EMBL" id="BAA96892.1"/>
    </source>
</evidence>